<comment type="function">
    <text evidence="1">Catalyzes the transfer of a geranylgeranyl moiety from geranylgeranyl diphosphate to both cysteines of Rab proteins with the C-terminal sequence -XXCC, -XCXC and -CCXX, such as RAB1A, RAB3A, RAB5A and RAB7A.</text>
</comment>
<comment type="catalytic activity">
    <reaction>
        <text>geranylgeranyl diphosphate + L-cysteinyl-[protein] = S-geranylgeranyl-L-cysteinyl-[protein] + diphosphate</text>
        <dbReference type="Rhea" id="RHEA:21240"/>
        <dbReference type="Rhea" id="RHEA-COMP:10131"/>
        <dbReference type="Rhea" id="RHEA-COMP:11537"/>
        <dbReference type="ChEBI" id="CHEBI:29950"/>
        <dbReference type="ChEBI" id="CHEBI:33019"/>
        <dbReference type="ChEBI" id="CHEBI:57533"/>
        <dbReference type="ChEBI" id="CHEBI:86021"/>
        <dbReference type="EC" id="2.5.1.60"/>
    </reaction>
</comment>
<comment type="activity regulation">
    <text evidence="1">The enzymatic reaction requires the aid of a Rab escort protein (also called component A), such as CHM.</text>
</comment>
<comment type="subunit">
    <text evidence="2">Heterotrimer composed of RABGGTA, RABGGTB and CHM; within this trimer, RABGGTA and RABGGTB form the catalytic component B, while CHM (component A) mediates peptide substrate binding. The Rab GGTase dimer (RGGT) interacts with CHM (component A) prior to Rab protein binding; the association is stabilized by geranylgeranyl pyrophosphate (GGpp). The CHM:RGGT:Rab complex is destabilized by GGpp (By similarity). Interacts with non-phosphorylated form of RAB8A; phosphorylation of RAB8A disrupts this interaction (By similarity).</text>
</comment>
<comment type="similarity">
    <text evidence="4">Belongs to the protein prenyltransferase subunit alpha family.</text>
</comment>
<accession>A5A779</accession>
<gene>
    <name type="primary">RABGGTA</name>
</gene>
<dbReference type="EC" id="2.5.1.60"/>
<dbReference type="EMBL" id="AB271949">
    <property type="protein sequence ID" value="BAF62324.1"/>
    <property type="molecule type" value="mRNA"/>
</dbReference>
<dbReference type="RefSeq" id="NP_001092063.1">
    <property type="nucleotide sequence ID" value="NM_001098593.1"/>
</dbReference>
<dbReference type="RefSeq" id="XP_005666280.1">
    <property type="nucleotide sequence ID" value="XM_005666223.3"/>
</dbReference>
<dbReference type="SMR" id="A5A779"/>
<dbReference type="FunCoup" id="A5A779">
    <property type="interactions" value="1981"/>
</dbReference>
<dbReference type="STRING" id="9823.ENSSSCP00000070122"/>
<dbReference type="PaxDb" id="9823-ENSSSCP00000002178"/>
<dbReference type="PeptideAtlas" id="A5A779"/>
<dbReference type="Ensembl" id="ENSSSCT00000002230.4">
    <property type="protein sequence ID" value="ENSSSCP00000002178.2"/>
    <property type="gene ID" value="ENSSSCG00000001992.5"/>
</dbReference>
<dbReference type="Ensembl" id="ENSSSCT00070006142.1">
    <property type="protein sequence ID" value="ENSSSCP00070005016.1"/>
    <property type="gene ID" value="ENSSSCG00070003166.1"/>
</dbReference>
<dbReference type="Ensembl" id="ENSSSCT00090026689">
    <property type="protein sequence ID" value="ENSSSCP00090016455"/>
    <property type="gene ID" value="ENSSSCG00090015193"/>
</dbReference>
<dbReference type="Ensembl" id="ENSSSCT00110042153">
    <property type="protein sequence ID" value="ENSSSCP00110029598"/>
    <property type="gene ID" value="ENSSSCG00110021680"/>
</dbReference>
<dbReference type="Ensembl" id="ENSSSCT00115008086">
    <property type="protein sequence ID" value="ENSSSCP00115007584"/>
    <property type="gene ID" value="ENSSSCG00115004709"/>
</dbReference>
<dbReference type="GeneID" id="100049679"/>
<dbReference type="KEGG" id="ssc:100049679"/>
<dbReference type="CTD" id="5875"/>
<dbReference type="VGNC" id="VGNC:92046">
    <property type="gene designation" value="RABGGTA"/>
</dbReference>
<dbReference type="eggNOG" id="KOG0529">
    <property type="taxonomic scope" value="Eukaryota"/>
</dbReference>
<dbReference type="GeneTree" id="ENSGT00550000075121"/>
<dbReference type="HOGENOM" id="CLU_031996_3_2_1"/>
<dbReference type="InParanoid" id="A5A779"/>
<dbReference type="OMA" id="CAWHHRC"/>
<dbReference type="OrthoDB" id="1658at2759"/>
<dbReference type="TreeFam" id="TF315057"/>
<dbReference type="Proteomes" id="UP000008227">
    <property type="component" value="Chromosome 7"/>
</dbReference>
<dbReference type="Proteomes" id="UP000314985">
    <property type="component" value="Chromosome 7"/>
</dbReference>
<dbReference type="Proteomes" id="UP000694570">
    <property type="component" value="Unplaced"/>
</dbReference>
<dbReference type="Proteomes" id="UP000694571">
    <property type="component" value="Unplaced"/>
</dbReference>
<dbReference type="Proteomes" id="UP000694720">
    <property type="component" value="Unplaced"/>
</dbReference>
<dbReference type="Proteomes" id="UP000694722">
    <property type="component" value="Unplaced"/>
</dbReference>
<dbReference type="Proteomes" id="UP000694723">
    <property type="component" value="Unplaced"/>
</dbReference>
<dbReference type="Proteomes" id="UP000694724">
    <property type="component" value="Unplaced"/>
</dbReference>
<dbReference type="Proteomes" id="UP000694725">
    <property type="component" value="Unplaced"/>
</dbReference>
<dbReference type="Proteomes" id="UP000694726">
    <property type="component" value="Unplaced"/>
</dbReference>
<dbReference type="Proteomes" id="UP000694727">
    <property type="component" value="Unplaced"/>
</dbReference>
<dbReference type="Proteomes" id="UP000694728">
    <property type="component" value="Unplaced"/>
</dbReference>
<dbReference type="Bgee" id="ENSSSCG00000001992">
    <property type="expression patterns" value="Expressed in longissimus lumborum muscle and 40 other cell types or tissues"/>
</dbReference>
<dbReference type="ExpressionAtlas" id="A5A779">
    <property type="expression patterns" value="baseline"/>
</dbReference>
<dbReference type="GO" id="GO:0005737">
    <property type="term" value="C:cytoplasm"/>
    <property type="evidence" value="ECO:0000318"/>
    <property type="project" value="GO_Central"/>
</dbReference>
<dbReference type="GO" id="GO:0005968">
    <property type="term" value="C:Rab-protein geranylgeranyltransferase complex"/>
    <property type="evidence" value="ECO:0000250"/>
    <property type="project" value="UniProtKB"/>
</dbReference>
<dbReference type="GO" id="GO:0004663">
    <property type="term" value="F:Rab geranylgeranyltransferase activity"/>
    <property type="evidence" value="ECO:0000250"/>
    <property type="project" value="UniProtKB"/>
</dbReference>
<dbReference type="GO" id="GO:0031267">
    <property type="term" value="F:small GTPase binding"/>
    <property type="evidence" value="ECO:0000250"/>
    <property type="project" value="UniProtKB"/>
</dbReference>
<dbReference type="GO" id="GO:0008270">
    <property type="term" value="F:zinc ion binding"/>
    <property type="evidence" value="ECO:0007669"/>
    <property type="project" value="InterPro"/>
</dbReference>
<dbReference type="GO" id="GO:0006888">
    <property type="term" value="P:endoplasmic reticulum to Golgi vesicle-mediated transport"/>
    <property type="evidence" value="ECO:0000318"/>
    <property type="project" value="GO_Central"/>
</dbReference>
<dbReference type="GO" id="GO:0018344">
    <property type="term" value="P:protein geranylgeranylation"/>
    <property type="evidence" value="ECO:0000250"/>
    <property type="project" value="UniProtKB"/>
</dbReference>
<dbReference type="FunFam" id="1.25.40.120:FF:000035">
    <property type="entry name" value="Geranylgeranyl transferase type-2 subunit alpha"/>
    <property type="match status" value="2"/>
</dbReference>
<dbReference type="FunFam" id="2.60.40.1130:FF:000001">
    <property type="entry name" value="Geranylgeranyl transferase type-2 subunit alpha"/>
    <property type="match status" value="1"/>
</dbReference>
<dbReference type="FunFam" id="3.80.10.10:FF:000138">
    <property type="entry name" value="geranylgeranyl transferase type-2 subunit alpha"/>
    <property type="match status" value="1"/>
</dbReference>
<dbReference type="Gene3D" id="1.25.40.120">
    <property type="entry name" value="Protein prenylyltransferase"/>
    <property type="match status" value="1"/>
</dbReference>
<dbReference type="Gene3D" id="2.60.40.1130">
    <property type="entry name" value="Rab geranylgeranyltransferase alpha-subunit, insert domain"/>
    <property type="match status" value="1"/>
</dbReference>
<dbReference type="Gene3D" id="3.80.10.10">
    <property type="entry name" value="Ribonuclease Inhibitor"/>
    <property type="match status" value="1"/>
</dbReference>
<dbReference type="InterPro" id="IPR032675">
    <property type="entry name" value="LRR_dom_sf"/>
</dbReference>
<dbReference type="InterPro" id="IPR002088">
    <property type="entry name" value="Prenyl_trans_a"/>
</dbReference>
<dbReference type="InterPro" id="IPR036254">
    <property type="entry name" value="RabGGT_asu_insert-dom_sf"/>
</dbReference>
<dbReference type="InterPro" id="IPR009087">
    <property type="entry name" value="RabGGT_asu_insert-domain"/>
</dbReference>
<dbReference type="PANTHER" id="PTHR11129:SF2">
    <property type="entry name" value="GERANYLGERANYL TRANSFERASE TYPE-2 SUBUNIT ALPHA"/>
    <property type="match status" value="1"/>
</dbReference>
<dbReference type="PANTHER" id="PTHR11129">
    <property type="entry name" value="PROTEIN FARNESYLTRANSFERASE ALPHA SUBUNIT/RAB GERANYLGERANYL TRANSFERASE ALPHA SUBUNIT"/>
    <property type="match status" value="1"/>
</dbReference>
<dbReference type="Pfam" id="PF01239">
    <property type="entry name" value="PPTA"/>
    <property type="match status" value="4"/>
</dbReference>
<dbReference type="Pfam" id="PF07711">
    <property type="entry name" value="RabGGT_insert"/>
    <property type="match status" value="1"/>
</dbReference>
<dbReference type="SUPFAM" id="SSF52075">
    <property type="entry name" value="Outer arm dynein light chain 1"/>
    <property type="match status" value="1"/>
</dbReference>
<dbReference type="SUPFAM" id="SSF48439">
    <property type="entry name" value="Protein prenylyltransferase"/>
    <property type="match status" value="1"/>
</dbReference>
<dbReference type="SUPFAM" id="SSF49594">
    <property type="entry name" value="Rab geranylgeranyltransferase alpha-subunit, insert domain"/>
    <property type="match status" value="1"/>
</dbReference>
<dbReference type="PROSITE" id="PS51147">
    <property type="entry name" value="PFTA"/>
    <property type="match status" value="6"/>
</dbReference>
<protein>
    <recommendedName>
        <fullName>Geranylgeranyl transferase type-2 subunit alpha</fullName>
        <ecNumber>2.5.1.60</ecNumber>
    </recommendedName>
    <alternativeName>
        <fullName>Geranylgeranyl transferase type II subunit alpha</fullName>
    </alternativeName>
    <alternativeName>
        <fullName>Rab geranyl-geranyltransferase subunit alpha</fullName>
        <shortName>Rab GG transferase alpha</shortName>
        <shortName>Rab GGTase alpha</shortName>
    </alternativeName>
    <alternativeName>
        <fullName>Rab geranylgeranyltransferase subunit alpha</fullName>
    </alternativeName>
</protein>
<organism>
    <name type="scientific">Sus scrofa</name>
    <name type="common">Pig</name>
    <dbReference type="NCBI Taxonomy" id="9823"/>
    <lineage>
        <taxon>Eukaryota</taxon>
        <taxon>Metazoa</taxon>
        <taxon>Chordata</taxon>
        <taxon>Craniata</taxon>
        <taxon>Vertebrata</taxon>
        <taxon>Euteleostomi</taxon>
        <taxon>Mammalia</taxon>
        <taxon>Eutheria</taxon>
        <taxon>Laurasiatheria</taxon>
        <taxon>Artiodactyla</taxon>
        <taxon>Suina</taxon>
        <taxon>Suidae</taxon>
        <taxon>Sus</taxon>
    </lineage>
</organism>
<name>PGTA_PIG</name>
<feature type="chain" id="PRO_0000331286" description="Geranylgeranyl transferase type-2 subunit alpha">
    <location>
        <begin position="1"/>
        <end position="567"/>
    </location>
</feature>
<feature type="repeat" description="PFTA 1">
    <location>
        <begin position="44"/>
        <end position="78"/>
    </location>
</feature>
<feature type="repeat" description="PFTA 2">
    <location>
        <begin position="88"/>
        <end position="122"/>
    </location>
</feature>
<feature type="repeat" description="PFTA 3">
    <location>
        <begin position="124"/>
        <end position="158"/>
    </location>
</feature>
<feature type="repeat" description="PFTA 4">
    <location>
        <begin position="159"/>
        <end position="193"/>
    </location>
</feature>
<feature type="repeat" description="PFTA 5">
    <location>
        <begin position="207"/>
        <end position="241"/>
    </location>
</feature>
<feature type="repeat" description="PFTA 6">
    <location>
        <begin position="363"/>
        <end position="397"/>
    </location>
</feature>
<feature type="repeat" description="LRR 1">
    <location>
        <begin position="442"/>
        <end position="463"/>
    </location>
</feature>
<feature type="repeat" description="LRR 2">
    <location>
        <begin position="464"/>
        <end position="486"/>
    </location>
</feature>
<feature type="repeat" description="LRR 3">
    <location>
        <begin position="487"/>
        <end position="508"/>
    </location>
</feature>
<feature type="repeat" description="LRR 4">
    <location>
        <begin position="509"/>
        <end position="530"/>
    </location>
</feature>
<feature type="repeat" description="LRR 5">
    <location>
        <begin position="534"/>
        <end position="555"/>
    </location>
</feature>
<feature type="modified residue" description="Phosphoserine" evidence="3">
    <location>
        <position position="98"/>
    </location>
</feature>
<reference key="1">
    <citation type="submission" date="2006-09" db="EMBL/GenBank/DDBJ databases">
        <title>Sequences and genetic variations of fourty-four porcine coat color related genes.</title>
        <authorList>
            <person name="Okumura N."/>
            <person name="Matsumoto T."/>
            <person name="Hamasima N."/>
            <person name="Uenishi H."/>
            <person name="Ogawa T."/>
            <person name="Komatsuda A."/>
            <person name="Fukudome N."/>
            <person name="Ide H."/>
            <person name="Suzuki A."/>
            <person name="Kojima C."/>
            <person name="Awata T."/>
        </authorList>
    </citation>
    <scope>NUCLEOTIDE SEQUENCE [MRNA]</scope>
</reference>
<keyword id="KW-0433">Leucine-rich repeat</keyword>
<keyword id="KW-0597">Phosphoprotein</keyword>
<keyword id="KW-0637">Prenyltransferase</keyword>
<keyword id="KW-1185">Reference proteome</keyword>
<keyword id="KW-0677">Repeat</keyword>
<keyword id="KW-0808">Transferase</keyword>
<proteinExistence type="evidence at transcript level"/>
<evidence type="ECO:0000250" key="1"/>
<evidence type="ECO:0000250" key="2">
    <source>
        <dbReference type="UniProtKB" id="Q92696"/>
    </source>
</evidence>
<evidence type="ECO:0000250" key="3">
    <source>
        <dbReference type="UniProtKB" id="Q9JHK4"/>
    </source>
</evidence>
<evidence type="ECO:0000305" key="4"/>
<sequence length="567" mass="64901">MHGRLKVKTSEEQAEAKRLEREQKLKLYQTATQTVFQKRQAGELDESVLELTSQILGANPDFATLWNCRREVLQRLEVQKSPEELAALVKAELGFLESCLRVNPKSYGTWHHRCWLLGRLPEPNWARELELCARFLEVDERNFHCWDYRRFVASQAAVPPAEELAFTDSLITRNFSNYSSWHYRSCLLPQLHPQPDSGPQGRLPEDVLLKELELVQNAFFTDPNDQSAWFYHRWLLGRADPQDALRCLHVSRDEACLTVSFSRPLLVGPSTETLLLMVNESPLSVEWRTPDGRNRPSHVWLCDLPAASLNDHLPQHTFRVIWTAGNAQKECVLLKGRQEGWCRDSATDEQLFRCELSVEKSTVLQSELESCKELQELEPENKWCLLTIILLMRALDPLLYEKETLQYFQTLKAVDPMRAAYLDDLRSKFLLENSVLKMEYADVRVLHLGHKDLTVLCHLEQLLLVTHLDLSHNRLRALPPALAALRCLEVLQANDNAIESLDGVTNLPRLQELSLCNNRLQQPAVLQPLASCPRLVLLNLQDNPLCQAVGISEHLAELLPSVSSILT</sequence>